<gene>
    <name evidence="1" type="primary">era</name>
    <name type="ordered locus">EcHS_A2721</name>
</gene>
<accession>A8A376</accession>
<reference key="1">
    <citation type="journal article" date="2008" name="J. Bacteriol.">
        <title>The pangenome structure of Escherichia coli: comparative genomic analysis of E. coli commensal and pathogenic isolates.</title>
        <authorList>
            <person name="Rasko D.A."/>
            <person name="Rosovitz M.J."/>
            <person name="Myers G.S.A."/>
            <person name="Mongodin E.F."/>
            <person name="Fricke W.F."/>
            <person name="Gajer P."/>
            <person name="Crabtree J."/>
            <person name="Sebaihia M."/>
            <person name="Thomson N.R."/>
            <person name="Chaudhuri R."/>
            <person name="Henderson I.R."/>
            <person name="Sperandio V."/>
            <person name="Ravel J."/>
        </authorList>
    </citation>
    <scope>NUCLEOTIDE SEQUENCE [LARGE SCALE GENOMIC DNA]</scope>
    <source>
        <strain>HS</strain>
    </source>
</reference>
<proteinExistence type="inferred from homology"/>
<keyword id="KW-0997">Cell inner membrane</keyword>
<keyword id="KW-1003">Cell membrane</keyword>
<keyword id="KW-0963">Cytoplasm</keyword>
<keyword id="KW-0342">GTP-binding</keyword>
<keyword id="KW-0472">Membrane</keyword>
<keyword id="KW-0547">Nucleotide-binding</keyword>
<keyword id="KW-0690">Ribosome biogenesis</keyword>
<keyword id="KW-0694">RNA-binding</keyword>
<keyword id="KW-0699">rRNA-binding</keyword>
<protein>
    <recommendedName>
        <fullName evidence="1">GTPase Era</fullName>
    </recommendedName>
</protein>
<feature type="chain" id="PRO_1000079687" description="GTPase Era">
    <location>
        <begin position="1"/>
        <end position="301"/>
    </location>
</feature>
<feature type="domain" description="Era-type G" evidence="2">
    <location>
        <begin position="7"/>
        <end position="175"/>
    </location>
</feature>
<feature type="domain" description="KH type-2" evidence="1">
    <location>
        <begin position="206"/>
        <end position="283"/>
    </location>
</feature>
<feature type="region of interest" description="G1" evidence="2">
    <location>
        <begin position="15"/>
        <end position="22"/>
    </location>
</feature>
<feature type="region of interest" description="G2" evidence="2">
    <location>
        <begin position="41"/>
        <end position="45"/>
    </location>
</feature>
<feature type="region of interest" description="G3" evidence="2">
    <location>
        <begin position="62"/>
        <end position="65"/>
    </location>
</feature>
<feature type="region of interest" description="G4" evidence="2">
    <location>
        <begin position="124"/>
        <end position="127"/>
    </location>
</feature>
<feature type="region of interest" description="G5" evidence="2">
    <location>
        <begin position="154"/>
        <end position="156"/>
    </location>
</feature>
<feature type="binding site" evidence="1">
    <location>
        <begin position="15"/>
        <end position="22"/>
    </location>
    <ligand>
        <name>GTP</name>
        <dbReference type="ChEBI" id="CHEBI:37565"/>
    </ligand>
</feature>
<feature type="binding site" evidence="1">
    <location>
        <begin position="62"/>
        <end position="66"/>
    </location>
    <ligand>
        <name>GTP</name>
        <dbReference type="ChEBI" id="CHEBI:37565"/>
    </ligand>
</feature>
<feature type="binding site" evidence="1">
    <location>
        <begin position="124"/>
        <end position="127"/>
    </location>
    <ligand>
        <name>GTP</name>
        <dbReference type="ChEBI" id="CHEBI:37565"/>
    </ligand>
</feature>
<comment type="function">
    <text evidence="1">An essential GTPase that binds both GDP and GTP, with rapid nucleotide exchange. Plays a role in 16S rRNA processing and 30S ribosomal subunit biogenesis and possibly also in cell cycle regulation and energy metabolism.</text>
</comment>
<comment type="subunit">
    <text evidence="1">Monomer.</text>
</comment>
<comment type="subcellular location">
    <subcellularLocation>
        <location>Cytoplasm</location>
    </subcellularLocation>
    <subcellularLocation>
        <location evidence="1">Cell inner membrane</location>
        <topology evidence="1">Peripheral membrane protein</topology>
    </subcellularLocation>
</comment>
<comment type="similarity">
    <text evidence="1 2">Belongs to the TRAFAC class TrmE-Era-EngA-EngB-Septin-like GTPase superfamily. Era GTPase family.</text>
</comment>
<name>ERA_ECOHS</name>
<dbReference type="EMBL" id="CP000802">
    <property type="protein sequence ID" value="ABV06980.1"/>
    <property type="molecule type" value="Genomic_DNA"/>
</dbReference>
<dbReference type="RefSeq" id="WP_000020749.1">
    <property type="nucleotide sequence ID" value="NC_009800.1"/>
</dbReference>
<dbReference type="SMR" id="A8A376"/>
<dbReference type="GeneID" id="75172680"/>
<dbReference type="KEGG" id="ecx:EcHS_A2721"/>
<dbReference type="HOGENOM" id="CLU_038009_1_2_6"/>
<dbReference type="GO" id="GO:0005829">
    <property type="term" value="C:cytosol"/>
    <property type="evidence" value="ECO:0007669"/>
    <property type="project" value="TreeGrafter"/>
</dbReference>
<dbReference type="GO" id="GO:0005886">
    <property type="term" value="C:plasma membrane"/>
    <property type="evidence" value="ECO:0007669"/>
    <property type="project" value="UniProtKB-SubCell"/>
</dbReference>
<dbReference type="GO" id="GO:0005525">
    <property type="term" value="F:GTP binding"/>
    <property type="evidence" value="ECO:0007669"/>
    <property type="project" value="UniProtKB-UniRule"/>
</dbReference>
<dbReference type="GO" id="GO:0003924">
    <property type="term" value="F:GTPase activity"/>
    <property type="evidence" value="ECO:0007669"/>
    <property type="project" value="UniProtKB-UniRule"/>
</dbReference>
<dbReference type="GO" id="GO:0043024">
    <property type="term" value="F:ribosomal small subunit binding"/>
    <property type="evidence" value="ECO:0007669"/>
    <property type="project" value="TreeGrafter"/>
</dbReference>
<dbReference type="GO" id="GO:0070181">
    <property type="term" value="F:small ribosomal subunit rRNA binding"/>
    <property type="evidence" value="ECO:0007669"/>
    <property type="project" value="UniProtKB-UniRule"/>
</dbReference>
<dbReference type="GO" id="GO:0000028">
    <property type="term" value="P:ribosomal small subunit assembly"/>
    <property type="evidence" value="ECO:0007669"/>
    <property type="project" value="TreeGrafter"/>
</dbReference>
<dbReference type="CDD" id="cd04163">
    <property type="entry name" value="Era"/>
    <property type="match status" value="1"/>
</dbReference>
<dbReference type="CDD" id="cd22534">
    <property type="entry name" value="KH-II_Era"/>
    <property type="match status" value="1"/>
</dbReference>
<dbReference type="FunFam" id="3.30.300.20:FF:000003">
    <property type="entry name" value="GTPase Era"/>
    <property type="match status" value="1"/>
</dbReference>
<dbReference type="FunFam" id="3.40.50.300:FF:000094">
    <property type="entry name" value="GTPase Era"/>
    <property type="match status" value="1"/>
</dbReference>
<dbReference type="Gene3D" id="3.30.300.20">
    <property type="match status" value="1"/>
</dbReference>
<dbReference type="Gene3D" id="3.40.50.300">
    <property type="entry name" value="P-loop containing nucleotide triphosphate hydrolases"/>
    <property type="match status" value="1"/>
</dbReference>
<dbReference type="HAMAP" id="MF_00367">
    <property type="entry name" value="GTPase_Era"/>
    <property type="match status" value="1"/>
</dbReference>
<dbReference type="InterPro" id="IPR030388">
    <property type="entry name" value="G_ERA_dom"/>
</dbReference>
<dbReference type="InterPro" id="IPR006073">
    <property type="entry name" value="GTP-bd"/>
</dbReference>
<dbReference type="InterPro" id="IPR005662">
    <property type="entry name" value="GTPase_Era-like"/>
</dbReference>
<dbReference type="InterPro" id="IPR015946">
    <property type="entry name" value="KH_dom-like_a/b"/>
</dbReference>
<dbReference type="InterPro" id="IPR004044">
    <property type="entry name" value="KH_dom_type_2"/>
</dbReference>
<dbReference type="InterPro" id="IPR009019">
    <property type="entry name" value="KH_sf_prok-type"/>
</dbReference>
<dbReference type="InterPro" id="IPR027417">
    <property type="entry name" value="P-loop_NTPase"/>
</dbReference>
<dbReference type="InterPro" id="IPR005225">
    <property type="entry name" value="Small_GTP-bd"/>
</dbReference>
<dbReference type="NCBIfam" id="TIGR00436">
    <property type="entry name" value="era"/>
    <property type="match status" value="1"/>
</dbReference>
<dbReference type="NCBIfam" id="NF000908">
    <property type="entry name" value="PRK00089.1"/>
    <property type="match status" value="1"/>
</dbReference>
<dbReference type="NCBIfam" id="TIGR00231">
    <property type="entry name" value="small_GTP"/>
    <property type="match status" value="1"/>
</dbReference>
<dbReference type="PANTHER" id="PTHR42698">
    <property type="entry name" value="GTPASE ERA"/>
    <property type="match status" value="1"/>
</dbReference>
<dbReference type="PANTHER" id="PTHR42698:SF1">
    <property type="entry name" value="GTPASE ERA, MITOCHONDRIAL"/>
    <property type="match status" value="1"/>
</dbReference>
<dbReference type="Pfam" id="PF07650">
    <property type="entry name" value="KH_2"/>
    <property type="match status" value="1"/>
</dbReference>
<dbReference type="Pfam" id="PF01926">
    <property type="entry name" value="MMR_HSR1"/>
    <property type="match status" value="1"/>
</dbReference>
<dbReference type="SUPFAM" id="SSF52540">
    <property type="entry name" value="P-loop containing nucleoside triphosphate hydrolases"/>
    <property type="match status" value="1"/>
</dbReference>
<dbReference type="SUPFAM" id="SSF54814">
    <property type="entry name" value="Prokaryotic type KH domain (KH-domain type II)"/>
    <property type="match status" value="1"/>
</dbReference>
<dbReference type="PROSITE" id="PS51713">
    <property type="entry name" value="G_ERA"/>
    <property type="match status" value="1"/>
</dbReference>
<dbReference type="PROSITE" id="PS50823">
    <property type="entry name" value="KH_TYPE_2"/>
    <property type="match status" value="1"/>
</dbReference>
<sequence>MSIDKSYCGFIAIVGRPNVGKSTLLNKLLGQKISITSRKAQTTRHRIVGIHTEGAYQAIYVDTPGLHMEEKRAINRLMNKAASSSIGDVELVIFVVEGTRWTPDDEMVLNKLREGKAPVILAVNKVDNVQEKADLLPHLQFLASQMNFLDIVPISAETGLNVDTIAAIVRKHLPEATHHFPEDYITDRSQRFMASEIIREKLMRFLGAELPYSVTVEIERFVSNERGGYDINGLILVEREGQKKMVIGNKGAKIKTIGIEARKDMQEMFEAPVHLELWVKVKSGWADDERALRSLGYVDDL</sequence>
<evidence type="ECO:0000255" key="1">
    <source>
        <dbReference type="HAMAP-Rule" id="MF_00367"/>
    </source>
</evidence>
<evidence type="ECO:0000255" key="2">
    <source>
        <dbReference type="PROSITE-ProRule" id="PRU01050"/>
    </source>
</evidence>
<organism>
    <name type="scientific">Escherichia coli O9:H4 (strain HS)</name>
    <dbReference type="NCBI Taxonomy" id="331112"/>
    <lineage>
        <taxon>Bacteria</taxon>
        <taxon>Pseudomonadati</taxon>
        <taxon>Pseudomonadota</taxon>
        <taxon>Gammaproteobacteria</taxon>
        <taxon>Enterobacterales</taxon>
        <taxon>Enterobacteriaceae</taxon>
        <taxon>Escherichia</taxon>
    </lineage>
</organism>